<gene>
    <name evidence="1" type="primary">nadE</name>
    <name type="ordered locus">SAOUHSC_02132</name>
</gene>
<name>NADE_STAA8</name>
<organism>
    <name type="scientific">Staphylococcus aureus (strain NCTC 8325 / PS 47)</name>
    <dbReference type="NCBI Taxonomy" id="93061"/>
    <lineage>
        <taxon>Bacteria</taxon>
        <taxon>Bacillati</taxon>
        <taxon>Bacillota</taxon>
        <taxon>Bacilli</taxon>
        <taxon>Bacillales</taxon>
        <taxon>Staphylococcaceae</taxon>
        <taxon>Staphylococcus</taxon>
    </lineage>
</organism>
<accession>Q2G236</accession>
<feature type="chain" id="PRO_1000077615" description="NH(3)-dependent NAD(+) synthetase">
    <location>
        <begin position="1"/>
        <end position="273"/>
    </location>
</feature>
<feature type="binding site" evidence="1">
    <location>
        <begin position="47"/>
        <end position="54"/>
    </location>
    <ligand>
        <name>ATP</name>
        <dbReference type="ChEBI" id="CHEBI:30616"/>
    </ligand>
</feature>
<feature type="binding site" evidence="1">
    <location>
        <position position="53"/>
    </location>
    <ligand>
        <name>Mg(2+)</name>
        <dbReference type="ChEBI" id="CHEBI:18420"/>
    </ligand>
</feature>
<feature type="binding site" evidence="1">
    <location>
        <position position="139"/>
    </location>
    <ligand>
        <name>deamido-NAD(+)</name>
        <dbReference type="ChEBI" id="CHEBI:58437"/>
    </ligand>
</feature>
<feature type="binding site" evidence="1">
    <location>
        <position position="159"/>
    </location>
    <ligand>
        <name>ATP</name>
        <dbReference type="ChEBI" id="CHEBI:30616"/>
    </ligand>
</feature>
<feature type="binding site" evidence="1">
    <location>
        <position position="164"/>
    </location>
    <ligand>
        <name>Mg(2+)</name>
        <dbReference type="ChEBI" id="CHEBI:18420"/>
    </ligand>
</feature>
<feature type="binding site" evidence="1">
    <location>
        <position position="172"/>
    </location>
    <ligand>
        <name>deamido-NAD(+)</name>
        <dbReference type="ChEBI" id="CHEBI:58437"/>
    </ligand>
</feature>
<feature type="binding site" evidence="1">
    <location>
        <position position="179"/>
    </location>
    <ligand>
        <name>deamido-NAD(+)</name>
        <dbReference type="ChEBI" id="CHEBI:58437"/>
    </ligand>
</feature>
<feature type="binding site" evidence="1">
    <location>
        <position position="188"/>
    </location>
    <ligand>
        <name>ATP</name>
        <dbReference type="ChEBI" id="CHEBI:30616"/>
    </ligand>
</feature>
<feature type="binding site" evidence="1">
    <location>
        <position position="210"/>
    </location>
    <ligand>
        <name>ATP</name>
        <dbReference type="ChEBI" id="CHEBI:30616"/>
    </ligand>
</feature>
<feature type="binding site" evidence="1">
    <location>
        <begin position="259"/>
        <end position="260"/>
    </location>
    <ligand>
        <name>deamido-NAD(+)</name>
        <dbReference type="ChEBI" id="CHEBI:58437"/>
    </ligand>
</feature>
<protein>
    <recommendedName>
        <fullName evidence="1">NH(3)-dependent NAD(+) synthetase</fullName>
        <ecNumber evidence="1">6.3.1.5</ecNumber>
    </recommendedName>
</protein>
<evidence type="ECO:0000255" key="1">
    <source>
        <dbReference type="HAMAP-Rule" id="MF_00193"/>
    </source>
</evidence>
<reference key="1">
    <citation type="book" date="2006" name="Gram positive pathogens, 2nd edition">
        <title>The Staphylococcus aureus NCTC 8325 genome.</title>
        <editorList>
            <person name="Fischetti V."/>
            <person name="Novick R."/>
            <person name="Ferretti J."/>
            <person name="Portnoy D."/>
            <person name="Rood J."/>
        </editorList>
        <authorList>
            <person name="Gillaspy A.F."/>
            <person name="Worrell V."/>
            <person name="Orvis J."/>
            <person name="Roe B.A."/>
            <person name="Dyer D.W."/>
            <person name="Iandolo J.J."/>
        </authorList>
    </citation>
    <scope>NUCLEOTIDE SEQUENCE [LARGE SCALE GENOMIC DNA]</scope>
    <source>
        <strain>NCTC 8325 / PS 47</strain>
    </source>
</reference>
<comment type="function">
    <text evidence="1">Catalyzes the ATP-dependent amidation of deamido-NAD to form NAD. Uses ammonia as a nitrogen source.</text>
</comment>
<comment type="catalytic activity">
    <reaction evidence="1">
        <text>deamido-NAD(+) + NH4(+) + ATP = AMP + diphosphate + NAD(+) + H(+)</text>
        <dbReference type="Rhea" id="RHEA:21188"/>
        <dbReference type="ChEBI" id="CHEBI:15378"/>
        <dbReference type="ChEBI" id="CHEBI:28938"/>
        <dbReference type="ChEBI" id="CHEBI:30616"/>
        <dbReference type="ChEBI" id="CHEBI:33019"/>
        <dbReference type="ChEBI" id="CHEBI:57540"/>
        <dbReference type="ChEBI" id="CHEBI:58437"/>
        <dbReference type="ChEBI" id="CHEBI:456215"/>
        <dbReference type="EC" id="6.3.1.5"/>
    </reaction>
</comment>
<comment type="pathway">
    <text evidence="1">Cofactor biosynthesis; NAD(+) biosynthesis; NAD(+) from deamido-NAD(+) (ammonia route): step 1/1.</text>
</comment>
<comment type="subunit">
    <text evidence="1">Homodimer.</text>
</comment>
<comment type="similarity">
    <text evidence="1">Belongs to the NAD synthetase family.</text>
</comment>
<keyword id="KW-0002">3D-structure</keyword>
<keyword id="KW-0067">ATP-binding</keyword>
<keyword id="KW-0436">Ligase</keyword>
<keyword id="KW-0460">Magnesium</keyword>
<keyword id="KW-0479">Metal-binding</keyword>
<keyword id="KW-0520">NAD</keyword>
<keyword id="KW-0547">Nucleotide-binding</keyword>
<keyword id="KW-1185">Reference proteome</keyword>
<dbReference type="EC" id="6.3.1.5" evidence="1"/>
<dbReference type="EMBL" id="CP000253">
    <property type="protein sequence ID" value="ABD31180.1"/>
    <property type="molecule type" value="Genomic_DNA"/>
</dbReference>
<dbReference type="RefSeq" id="WP_000040873.1">
    <property type="nucleotide sequence ID" value="NZ_LS483365.1"/>
</dbReference>
<dbReference type="RefSeq" id="YP_500622.1">
    <property type="nucleotide sequence ID" value="NC_007795.1"/>
</dbReference>
<dbReference type="PDB" id="6KV3">
    <property type="method" value="X-ray"/>
    <property type="resolution" value="2.30 A"/>
    <property type="chains" value="A/B/C/D=1-273"/>
</dbReference>
<dbReference type="PDBsum" id="6KV3"/>
<dbReference type="SMR" id="Q2G236"/>
<dbReference type="STRING" id="93061.SAOUHSC_02132"/>
<dbReference type="PaxDb" id="1280-SAXN108_2013"/>
<dbReference type="GeneID" id="3921202"/>
<dbReference type="KEGG" id="sao:SAOUHSC_02132"/>
<dbReference type="PATRIC" id="fig|93061.5.peg.1934"/>
<dbReference type="eggNOG" id="COG0171">
    <property type="taxonomic scope" value="Bacteria"/>
</dbReference>
<dbReference type="HOGENOM" id="CLU_059327_3_0_9"/>
<dbReference type="OrthoDB" id="9803818at2"/>
<dbReference type="UniPathway" id="UPA00253">
    <property type="reaction ID" value="UER00333"/>
</dbReference>
<dbReference type="PRO" id="PR:Q2G236"/>
<dbReference type="Proteomes" id="UP000008816">
    <property type="component" value="Chromosome"/>
</dbReference>
<dbReference type="GO" id="GO:0005737">
    <property type="term" value="C:cytoplasm"/>
    <property type="evidence" value="ECO:0000318"/>
    <property type="project" value="GO_Central"/>
</dbReference>
<dbReference type="GO" id="GO:0005524">
    <property type="term" value="F:ATP binding"/>
    <property type="evidence" value="ECO:0007669"/>
    <property type="project" value="UniProtKB-UniRule"/>
</dbReference>
<dbReference type="GO" id="GO:0004359">
    <property type="term" value="F:glutaminase activity"/>
    <property type="evidence" value="ECO:0007669"/>
    <property type="project" value="InterPro"/>
</dbReference>
<dbReference type="GO" id="GO:0046872">
    <property type="term" value="F:metal ion binding"/>
    <property type="evidence" value="ECO:0007669"/>
    <property type="project" value="UniProtKB-KW"/>
</dbReference>
<dbReference type="GO" id="GO:0003952">
    <property type="term" value="F:NAD+ synthase (glutamine-hydrolyzing) activity"/>
    <property type="evidence" value="ECO:0007669"/>
    <property type="project" value="InterPro"/>
</dbReference>
<dbReference type="GO" id="GO:0008795">
    <property type="term" value="F:NAD+ synthase activity"/>
    <property type="evidence" value="ECO:0007669"/>
    <property type="project" value="UniProtKB-UniRule"/>
</dbReference>
<dbReference type="GO" id="GO:0009435">
    <property type="term" value="P:NAD biosynthetic process"/>
    <property type="evidence" value="ECO:0000318"/>
    <property type="project" value="GO_Central"/>
</dbReference>
<dbReference type="CDD" id="cd00553">
    <property type="entry name" value="NAD_synthase"/>
    <property type="match status" value="1"/>
</dbReference>
<dbReference type="FunFam" id="3.40.50.620:FF:000015">
    <property type="entry name" value="NH(3)-dependent NAD(+) synthetase"/>
    <property type="match status" value="1"/>
</dbReference>
<dbReference type="Gene3D" id="3.40.50.620">
    <property type="entry name" value="HUPs"/>
    <property type="match status" value="1"/>
</dbReference>
<dbReference type="HAMAP" id="MF_00193">
    <property type="entry name" value="NadE_ammonia_dep"/>
    <property type="match status" value="1"/>
</dbReference>
<dbReference type="InterPro" id="IPR022310">
    <property type="entry name" value="NAD/GMP_synthase"/>
</dbReference>
<dbReference type="InterPro" id="IPR003694">
    <property type="entry name" value="NAD_synthase"/>
</dbReference>
<dbReference type="InterPro" id="IPR022926">
    <property type="entry name" value="NH(3)-dep_NAD(+)_synth"/>
</dbReference>
<dbReference type="InterPro" id="IPR014729">
    <property type="entry name" value="Rossmann-like_a/b/a_fold"/>
</dbReference>
<dbReference type="NCBIfam" id="TIGR00552">
    <property type="entry name" value="nadE"/>
    <property type="match status" value="1"/>
</dbReference>
<dbReference type="NCBIfam" id="NF001979">
    <property type="entry name" value="PRK00768.1"/>
    <property type="match status" value="1"/>
</dbReference>
<dbReference type="PANTHER" id="PTHR23090">
    <property type="entry name" value="NH 3 /GLUTAMINE-DEPENDENT NAD + SYNTHETASE"/>
    <property type="match status" value="1"/>
</dbReference>
<dbReference type="PANTHER" id="PTHR23090:SF7">
    <property type="entry name" value="NH(3)-DEPENDENT NAD(+) SYNTHETASE"/>
    <property type="match status" value="1"/>
</dbReference>
<dbReference type="Pfam" id="PF02540">
    <property type="entry name" value="NAD_synthase"/>
    <property type="match status" value="1"/>
</dbReference>
<dbReference type="SUPFAM" id="SSF52402">
    <property type="entry name" value="Adenine nucleotide alpha hydrolases-like"/>
    <property type="match status" value="1"/>
</dbReference>
<sequence>MSKLQDVIVQEMKVKKRIDSAEEIMELKQFIKNYVQSHSFIKSLVLGISGGQDSTLVGKLVQMSVNELREEGIDCTFIAVKLPYGVQKDADEVEQALRFIEPDEIVTVNIKPAVDQSVQSLKEAGIVLTDFQKGNEKARERMKVQFSIASNRQGIVVGTDHSAENITGFYTKYGDGAADIAPIFGLNKRQGRQLLAYLGAPKELYEKTPTADLEDDKPQLPDEDALGVTYEAIDNYLEGKPVTPEEQKVIENHYIRNAHKRELAYTRYTWPKS</sequence>
<proteinExistence type="evidence at protein level"/>